<reference key="1">
    <citation type="journal article" date="2013" name="PLoS ONE">
        <title>SjAPI, the first functionally characterized Ascaris-type protease inhibitor from animal venoms.</title>
        <authorList>
            <person name="Chen Z."/>
            <person name="Wang B."/>
            <person name="Hu J."/>
            <person name="Yang W."/>
            <person name="Cao Z."/>
            <person name="Zhuo R."/>
            <person name="Li W."/>
            <person name="Wu Y."/>
        </authorList>
    </citation>
    <scope>NUCLEOTIDE SEQUENCE [MRNA]</scope>
    <source>
        <tissue>Venom gland</tissue>
    </source>
</reference>
<organism>
    <name type="scientific">Scorpiops jendeki</name>
    <name type="common">Scorpion</name>
    <name type="synonym">Scorpiops hardwickii jendeki</name>
    <dbReference type="NCBI Taxonomy" id="587368"/>
    <lineage>
        <taxon>Eukaryota</taxon>
        <taxon>Metazoa</taxon>
        <taxon>Ecdysozoa</taxon>
        <taxon>Arthropoda</taxon>
        <taxon>Chelicerata</taxon>
        <taxon>Arachnida</taxon>
        <taxon>Scorpiones</taxon>
        <taxon>Iurida</taxon>
        <taxon>Chactoidea</taxon>
        <taxon>Euscorpiidae</taxon>
        <taxon>Scorpiopinae</taxon>
        <taxon>Scorpiopini</taxon>
        <taxon>Scorpiops</taxon>
    </lineage>
</organism>
<feature type="chain" id="PRO_0000423043" description="Venom peptide SjAPI-2" evidence="6">
    <location>
        <begin position="1"/>
        <end position="62"/>
    </location>
</feature>
<feature type="domain" description="TIL" evidence="3">
    <location>
        <begin position="4"/>
        <end position="60"/>
    </location>
</feature>
<feature type="disulfide bond" evidence="2">
    <location>
        <begin position="4"/>
        <end position="40"/>
    </location>
</feature>
<feature type="disulfide bond" evidence="2">
    <location>
        <begin position="14"/>
        <end position="36"/>
    </location>
</feature>
<feature type="disulfide bond" evidence="2">
    <location>
        <begin position="18"/>
        <end position="32"/>
    </location>
</feature>
<feature type="disulfide bond" evidence="2">
    <location>
        <begin position="22"/>
        <end position="60"/>
    </location>
</feature>
<feature type="disulfide bond" evidence="2">
    <location>
        <begin position="42"/>
        <end position="54"/>
    </location>
</feature>
<keyword id="KW-1015">Disulfide bond</keyword>
<keyword id="KW-0646">Protease inhibitor</keyword>
<keyword id="KW-0964">Secreted</keyword>
<keyword id="KW-0722">Serine protease inhibitor</keyword>
<sequence>QMTCRISGEVFTWCGTTCPLTCENFRNPPKHCPQGCFVGCMCRRGLVRHRNGRCVRPPRCYY</sequence>
<evidence type="ECO:0000250" key="1"/>
<evidence type="ECO:0000250" key="2">
    <source>
        <dbReference type="UniProtKB" id="P07851"/>
    </source>
</evidence>
<evidence type="ECO:0000255" key="3"/>
<evidence type="ECO:0000303" key="4">
    <source>
    </source>
</evidence>
<evidence type="ECO:0000305" key="5"/>
<evidence type="ECO:0000305" key="6">
    <source>
    </source>
</evidence>
<proteinExistence type="inferred from homology"/>
<dbReference type="SMR" id="P0DM56"/>
<dbReference type="GO" id="GO:0005576">
    <property type="term" value="C:extracellular region"/>
    <property type="evidence" value="ECO:0007669"/>
    <property type="project" value="UniProtKB-SubCell"/>
</dbReference>
<dbReference type="GO" id="GO:0004867">
    <property type="term" value="F:serine-type endopeptidase inhibitor activity"/>
    <property type="evidence" value="ECO:0007669"/>
    <property type="project" value="UniProtKB-KW"/>
</dbReference>
<dbReference type="CDD" id="cd19941">
    <property type="entry name" value="TIL"/>
    <property type="match status" value="1"/>
</dbReference>
<dbReference type="Gene3D" id="2.10.25.10">
    <property type="entry name" value="Laminin"/>
    <property type="match status" value="1"/>
</dbReference>
<dbReference type="InterPro" id="IPR036084">
    <property type="entry name" value="Ser_inhib-like_sf"/>
</dbReference>
<dbReference type="InterPro" id="IPR051368">
    <property type="entry name" value="SerProtInhib-TIL_Domain"/>
</dbReference>
<dbReference type="InterPro" id="IPR002919">
    <property type="entry name" value="TIL_dom"/>
</dbReference>
<dbReference type="PANTHER" id="PTHR23259:SF70">
    <property type="entry name" value="ACCESSORY GLAND PROTEIN ACP62F-RELATED"/>
    <property type="match status" value="1"/>
</dbReference>
<dbReference type="PANTHER" id="PTHR23259">
    <property type="entry name" value="RIDDLE"/>
    <property type="match status" value="1"/>
</dbReference>
<dbReference type="Pfam" id="PF01826">
    <property type="entry name" value="TIL"/>
    <property type="match status" value="1"/>
</dbReference>
<dbReference type="SUPFAM" id="SSF57567">
    <property type="entry name" value="Serine protease inhibitors"/>
    <property type="match status" value="1"/>
</dbReference>
<accession>P0DM56</accession>
<name>TIL2_SCOJE</name>
<comment type="function">
    <text evidence="1">Serine protease inhibitor.</text>
</comment>
<comment type="subcellular location">
    <subcellularLocation>
        <location evidence="6">Secreted</location>
    </subcellularLocation>
</comment>
<comment type="tissue specificity">
    <text evidence="6">Expressed by the venom gland.</text>
</comment>
<comment type="similarity">
    <text evidence="5">Belongs to the serine protease inhibitor-like (TIL domain-containing) family.</text>
</comment>
<protein>
    <recommendedName>
        <fullName evidence="4">Venom peptide SjAPI-2</fullName>
    </recommendedName>
    <alternativeName>
        <fullName evidence="5">Ascaris-type protease inhibitor-2</fullName>
    </alternativeName>
</protein>